<evidence type="ECO:0000255" key="1">
    <source>
        <dbReference type="HAMAP-Rule" id="MF_00171"/>
    </source>
</evidence>
<evidence type="ECO:0000256" key="2">
    <source>
        <dbReference type="SAM" id="MobiDB-lite"/>
    </source>
</evidence>
<accession>Q9Z9J0</accession>
<accession>Q9JPW1</accession>
<feature type="chain" id="PRO_0000057328" description="tRNA pseudouridine synthase A">
    <location>
        <begin position="1"/>
        <end position="263"/>
    </location>
</feature>
<feature type="region of interest" description="Disordered" evidence="2">
    <location>
        <begin position="232"/>
        <end position="263"/>
    </location>
</feature>
<feature type="compositionally biased region" description="Polar residues" evidence="2">
    <location>
        <begin position="241"/>
        <end position="263"/>
    </location>
</feature>
<feature type="active site" description="Nucleophile" evidence="1">
    <location>
        <position position="53"/>
    </location>
</feature>
<feature type="binding site" evidence="1">
    <location>
        <position position="111"/>
    </location>
    <ligand>
        <name>substrate</name>
    </ligand>
</feature>
<sequence length="263" mass="29166">MKRIGLKVAYDGTDFAGYQIQPNERTVQGELESVLKNIHKGMSIRVTASGRTDTGVHARGQIVHFDTSLSFPVDRWPIALNSQLPADICVLEAADVPADFHARYSAKTKEYRYRVLTSAQADVFRRNYTYHVRYPLDVEAMQRAAVQLLGTHDFSSFCAAKAEVEDKVRTIEDVALWREGDELIFSIRGNGFLYNMVRIIVGTLLEIGAGKRSAEEVAKILAARSREAAGKTAPGHGLISGRSNMTNGKLENNKTTNPCVTKY</sequence>
<keyword id="KW-0413">Isomerase</keyword>
<keyword id="KW-1185">Reference proteome</keyword>
<keyword id="KW-0819">tRNA processing</keyword>
<proteinExistence type="inferred from homology"/>
<name>TRUA_HALH5</name>
<gene>
    <name evidence="1" type="primary">truA</name>
    <name type="ordered locus">BH0167</name>
</gene>
<comment type="function">
    <text evidence="1">Formation of pseudouridine at positions 38, 39 and 40 in the anticodon stem and loop of transfer RNAs.</text>
</comment>
<comment type="catalytic activity">
    <reaction evidence="1">
        <text>uridine(38/39/40) in tRNA = pseudouridine(38/39/40) in tRNA</text>
        <dbReference type="Rhea" id="RHEA:22376"/>
        <dbReference type="Rhea" id="RHEA-COMP:10085"/>
        <dbReference type="Rhea" id="RHEA-COMP:10087"/>
        <dbReference type="ChEBI" id="CHEBI:65314"/>
        <dbReference type="ChEBI" id="CHEBI:65315"/>
        <dbReference type="EC" id="5.4.99.12"/>
    </reaction>
</comment>
<comment type="subunit">
    <text evidence="1">Homodimer.</text>
</comment>
<comment type="similarity">
    <text evidence="1">Belongs to the tRNA pseudouridine synthase TruA family.</text>
</comment>
<organism>
    <name type="scientific">Halalkalibacterium halodurans (strain ATCC BAA-125 / DSM 18197 / FERM 7344 / JCM 9153 / C-125)</name>
    <name type="common">Bacillus halodurans</name>
    <dbReference type="NCBI Taxonomy" id="272558"/>
    <lineage>
        <taxon>Bacteria</taxon>
        <taxon>Bacillati</taxon>
        <taxon>Bacillota</taxon>
        <taxon>Bacilli</taxon>
        <taxon>Bacillales</taxon>
        <taxon>Bacillaceae</taxon>
        <taxon>Halalkalibacterium (ex Joshi et al. 2022)</taxon>
    </lineage>
</organism>
<protein>
    <recommendedName>
        <fullName evidence="1">tRNA pseudouridine synthase A</fullName>
        <ecNumber evidence="1">5.4.99.12</ecNumber>
    </recommendedName>
    <alternativeName>
        <fullName evidence="1">tRNA pseudouridine(38-40) synthase</fullName>
    </alternativeName>
    <alternativeName>
        <fullName evidence="1">tRNA pseudouridylate synthase I</fullName>
    </alternativeName>
    <alternativeName>
        <fullName evidence="1">tRNA-uridine isomerase I</fullName>
    </alternativeName>
</protein>
<reference key="1">
    <citation type="journal article" date="1999" name="Biosci. Biotechnol. Biochem.">
        <title>Sequence analysis of a 32-kb region including the major ribosomal protein gene clusters from alkaliphilic Bacillus sp. strain C-125.</title>
        <authorList>
            <person name="Takami H."/>
            <person name="Takaki Y."/>
            <person name="Nakasone K."/>
            <person name="Hirama C."/>
            <person name="Inoue A."/>
            <person name="Horikoshi K."/>
        </authorList>
    </citation>
    <scope>NUCLEOTIDE SEQUENCE [GENOMIC DNA]</scope>
    <source>
        <strain>ATCC BAA-125 / DSM 18197 / FERM 7344 / JCM 9153 / C-125</strain>
    </source>
</reference>
<reference key="2">
    <citation type="journal article" date="2000" name="Nucleic Acids Res.">
        <title>Complete genome sequence of the alkaliphilic bacterium Bacillus halodurans and genomic sequence comparison with Bacillus subtilis.</title>
        <authorList>
            <person name="Takami H."/>
            <person name="Nakasone K."/>
            <person name="Takaki Y."/>
            <person name="Maeno G."/>
            <person name="Sasaki R."/>
            <person name="Masui N."/>
            <person name="Fuji F."/>
            <person name="Hirama C."/>
            <person name="Nakamura Y."/>
            <person name="Ogasawara N."/>
            <person name="Kuhara S."/>
            <person name="Horikoshi K."/>
        </authorList>
    </citation>
    <scope>NUCLEOTIDE SEQUENCE [LARGE SCALE GENOMIC DNA]</scope>
    <source>
        <strain>ATCC BAA-125 / DSM 18197 / FERM 7344 / JCM 9153 / C-125</strain>
    </source>
</reference>
<dbReference type="EC" id="5.4.99.12" evidence="1"/>
<dbReference type="EMBL" id="AB017508">
    <property type="protein sequence ID" value="BAA75303.1"/>
    <property type="molecule type" value="Genomic_DNA"/>
</dbReference>
<dbReference type="EMBL" id="BA000004">
    <property type="protein sequence ID" value="BAB03886.1"/>
    <property type="molecule type" value="Genomic_DNA"/>
</dbReference>
<dbReference type="PIR" id="T44415">
    <property type="entry name" value="T44415"/>
</dbReference>
<dbReference type="SMR" id="Q9Z9J0"/>
<dbReference type="STRING" id="272558.gene:10726007"/>
<dbReference type="KEGG" id="bha:BH0167"/>
<dbReference type="eggNOG" id="COG0101">
    <property type="taxonomic scope" value="Bacteria"/>
</dbReference>
<dbReference type="HOGENOM" id="CLU_014673_0_1_9"/>
<dbReference type="OrthoDB" id="9811823at2"/>
<dbReference type="Proteomes" id="UP000001258">
    <property type="component" value="Chromosome"/>
</dbReference>
<dbReference type="GO" id="GO:0003723">
    <property type="term" value="F:RNA binding"/>
    <property type="evidence" value="ECO:0007669"/>
    <property type="project" value="InterPro"/>
</dbReference>
<dbReference type="GO" id="GO:0160147">
    <property type="term" value="F:tRNA pseudouridine(38-40) synthase activity"/>
    <property type="evidence" value="ECO:0007669"/>
    <property type="project" value="UniProtKB-EC"/>
</dbReference>
<dbReference type="GO" id="GO:0031119">
    <property type="term" value="P:tRNA pseudouridine synthesis"/>
    <property type="evidence" value="ECO:0007669"/>
    <property type="project" value="UniProtKB-UniRule"/>
</dbReference>
<dbReference type="CDD" id="cd02570">
    <property type="entry name" value="PseudoU_synth_EcTruA"/>
    <property type="match status" value="1"/>
</dbReference>
<dbReference type="FunFam" id="3.30.70.580:FF:000001">
    <property type="entry name" value="tRNA pseudouridine synthase A"/>
    <property type="match status" value="1"/>
</dbReference>
<dbReference type="Gene3D" id="3.30.70.660">
    <property type="entry name" value="Pseudouridine synthase I, catalytic domain, C-terminal subdomain"/>
    <property type="match status" value="1"/>
</dbReference>
<dbReference type="Gene3D" id="3.30.70.580">
    <property type="entry name" value="Pseudouridine synthase I, catalytic domain, N-terminal subdomain"/>
    <property type="match status" value="1"/>
</dbReference>
<dbReference type="HAMAP" id="MF_00171">
    <property type="entry name" value="TruA"/>
    <property type="match status" value="1"/>
</dbReference>
<dbReference type="InterPro" id="IPR020103">
    <property type="entry name" value="PsdUridine_synth_cat_dom_sf"/>
</dbReference>
<dbReference type="InterPro" id="IPR001406">
    <property type="entry name" value="PsdUridine_synth_TruA"/>
</dbReference>
<dbReference type="InterPro" id="IPR020097">
    <property type="entry name" value="PsdUridine_synth_TruA_a/b_dom"/>
</dbReference>
<dbReference type="InterPro" id="IPR020095">
    <property type="entry name" value="PsdUridine_synth_TruA_C"/>
</dbReference>
<dbReference type="InterPro" id="IPR020094">
    <property type="entry name" value="TruA/RsuA/RluB/E/F_N"/>
</dbReference>
<dbReference type="NCBIfam" id="TIGR00071">
    <property type="entry name" value="hisT_truA"/>
    <property type="match status" value="1"/>
</dbReference>
<dbReference type="PANTHER" id="PTHR11142">
    <property type="entry name" value="PSEUDOURIDYLATE SYNTHASE"/>
    <property type="match status" value="1"/>
</dbReference>
<dbReference type="PANTHER" id="PTHR11142:SF0">
    <property type="entry name" value="TRNA PSEUDOURIDINE SYNTHASE-LIKE 1"/>
    <property type="match status" value="1"/>
</dbReference>
<dbReference type="Pfam" id="PF01416">
    <property type="entry name" value="PseudoU_synth_1"/>
    <property type="match status" value="2"/>
</dbReference>
<dbReference type="PIRSF" id="PIRSF001430">
    <property type="entry name" value="tRNA_psdUrid_synth"/>
    <property type="match status" value="1"/>
</dbReference>
<dbReference type="SUPFAM" id="SSF55120">
    <property type="entry name" value="Pseudouridine synthase"/>
    <property type="match status" value="1"/>
</dbReference>